<keyword id="KW-0002">3D-structure</keyword>
<keyword id="KW-0130">Cell adhesion</keyword>
<keyword id="KW-1003">Cell membrane</keyword>
<keyword id="KW-0145">Chemotaxis</keyword>
<keyword id="KW-0225">Disease variant</keyword>
<keyword id="KW-1015">Disulfide bond</keyword>
<keyword id="KW-0325">Glycoprotein</keyword>
<keyword id="KW-0358">Heparin-binding</keyword>
<keyword id="KW-1016">Hypogonadotropic hypogonadism</keyword>
<keyword id="KW-0956">Kallmann syndrome</keyword>
<keyword id="KW-0472">Membrane</keyword>
<keyword id="KW-0646">Protease inhibitor</keyword>
<keyword id="KW-1267">Proteomics identification</keyword>
<keyword id="KW-1185">Reference proteome</keyword>
<keyword id="KW-0677">Repeat</keyword>
<keyword id="KW-0964">Secreted</keyword>
<keyword id="KW-0722">Serine protease inhibitor</keyword>
<keyword id="KW-0732">Signal</keyword>
<sequence length="680" mass="76112">MVPGVPGAVLTLCLWLAASSGCLAAGPGAAAARRLDESLSAGSVQRARCASRCLSLQITRISAFFQHFQNNGSLVWCQNHKQCSKCLEPCKESGDLRKHQCQSFCEPLFPKKSYECLTSCEFLKYILLVKQGDCPAPEKASGFAAACVESCEVDNECSGVKKCCSNGCGHTCQVPKTLYKGVPLKPRKELRFTELQSGQLEVKWSSKFNISIEPVIYVVQRRWNYGIHPSEDDATHWQTVAQTTDERVQLTDIRPSRWYQFRVAAVNVHGTRGFTAPSKHFRSSKDPSAPPAPANLRLANSTVNSDGSVTVTIVWDLPEEPDIPVHHYKVFWSWMVSSKSLVPTKKKRRKTTDGFQNSVILEKLQPDCDYVVELQAITYWGQTRLKSAKVSLHFTSTHATNNKEQLVKTRKGGIQTQLPFQRRRPTRPLEVGAPFYQDGQLQVKVYWKKTEDPTVNRYHVRWFPEACAHNRTTGSEASSGMTHENYIILQDLSFSCKYKVTVQPIRPKSHSKAEAVFFTTPPCSALKGKSHKPVGCLGEAGHVLSKVLAKPENLSASFIVQDVNITGHFSWKMAKANLYQPMTGFQVTWAEVTTESRQNSLPNSIISQSQILPSDHYVLTVPNLRPSTLYRLEVQVLTPGGEGPATIKTFRTPELPPSSAHRSHLKHRHPHHYKPSPERY</sequence>
<evidence type="ECO:0000250" key="1"/>
<evidence type="ECO:0000255" key="2"/>
<evidence type="ECO:0000255" key="3">
    <source>
        <dbReference type="PROSITE-ProRule" id="PRU00316"/>
    </source>
</evidence>
<evidence type="ECO:0000255" key="4">
    <source>
        <dbReference type="PROSITE-ProRule" id="PRU00722"/>
    </source>
</evidence>
<evidence type="ECO:0000256" key="5">
    <source>
        <dbReference type="SAM" id="MobiDB-lite"/>
    </source>
</evidence>
<evidence type="ECO:0000269" key="6">
    <source>
    </source>
</evidence>
<evidence type="ECO:0000269" key="7">
    <source>
    </source>
</evidence>
<evidence type="ECO:0000269" key="8">
    <source>
    </source>
</evidence>
<evidence type="ECO:0000269" key="9">
    <source>
    </source>
</evidence>
<evidence type="ECO:0000269" key="10">
    <source>
    </source>
</evidence>
<evidence type="ECO:0000269" key="11">
    <source>
    </source>
</evidence>
<evidence type="ECO:0000269" key="12">
    <source>
    </source>
</evidence>
<evidence type="ECO:0000269" key="13">
    <source>
    </source>
</evidence>
<evidence type="ECO:0000269" key="14">
    <source>
    </source>
</evidence>
<evidence type="ECO:0000269" key="15">
    <source>
    </source>
</evidence>
<evidence type="ECO:0000269" key="16">
    <source>
    </source>
</evidence>
<evidence type="ECO:0000269" key="17">
    <source>
    </source>
</evidence>
<evidence type="ECO:0000269" key="18">
    <source>
    </source>
</evidence>
<evidence type="ECO:0000269" key="19">
    <source>
    </source>
</evidence>
<evidence type="ECO:0000269" key="20">
    <source>
    </source>
</evidence>
<evidence type="ECO:0000269" key="21">
    <source>
    </source>
</evidence>
<evidence type="ECO:0000269" key="22">
    <source>
    </source>
</evidence>
<evidence type="ECO:0000269" key="23">
    <source>
    </source>
</evidence>
<evidence type="ECO:0000269" key="24">
    <source>
    </source>
</evidence>
<evidence type="ECO:0000269" key="25">
    <source>
    </source>
</evidence>
<evidence type="ECO:0000269" key="26">
    <source>
    </source>
</evidence>
<evidence type="ECO:0000269" key="27">
    <source>
    </source>
</evidence>
<evidence type="ECO:0000269" key="28">
    <source ref="5"/>
</evidence>
<evidence type="ECO:0000303" key="29">
    <source>
    </source>
</evidence>
<evidence type="ECO:0000303" key="30">
    <source>
    </source>
</evidence>
<evidence type="ECO:0000305" key="31"/>
<evidence type="ECO:0000312" key="32">
    <source>
        <dbReference type="HGNC" id="HGNC:6211"/>
    </source>
</evidence>
<dbReference type="EMBL" id="M97252">
    <property type="protein sequence ID" value="AAA59202.1"/>
    <property type="molecule type" value="mRNA"/>
</dbReference>
<dbReference type="EMBL" id="S60085">
    <property type="protein sequence ID" value="AAB20108.1"/>
    <property type="status" value="ALT_SEQ"/>
    <property type="molecule type" value="mRNA"/>
</dbReference>
<dbReference type="EMBL" id="X60299">
    <property type="protein sequence ID" value="CAA42841.1"/>
    <property type="molecule type" value="mRNA"/>
</dbReference>
<dbReference type="EMBL" id="AC005184">
    <property type="status" value="NOT_ANNOTATED_CDS"/>
    <property type="molecule type" value="Genomic_DNA"/>
</dbReference>
<dbReference type="EMBL" id="AC006062">
    <property type="status" value="NOT_ANNOTATED_CDS"/>
    <property type="molecule type" value="Genomic_DNA"/>
</dbReference>
<dbReference type="EMBL" id="AC096511">
    <property type="status" value="NOT_ANNOTATED_CDS"/>
    <property type="molecule type" value="Genomic_DNA"/>
</dbReference>
<dbReference type="EMBL" id="CH471074">
    <property type="protein sequence ID" value="EAW98759.1"/>
    <property type="molecule type" value="Genomic_DNA"/>
</dbReference>
<dbReference type="EMBL" id="BC137426">
    <property type="protein sequence ID" value="AAI37427.1"/>
    <property type="molecule type" value="mRNA"/>
</dbReference>
<dbReference type="EMBL" id="BC137427">
    <property type="protein sequence ID" value="AAI37428.1"/>
    <property type="molecule type" value="mRNA"/>
</dbReference>
<dbReference type="EMBL" id="X82034">
    <property type="protein sequence ID" value="CAA57554.1"/>
    <property type="molecule type" value="Genomic_DNA"/>
</dbReference>
<dbReference type="CCDS" id="CCDS14130.1"/>
<dbReference type="PIR" id="A40351">
    <property type="entry name" value="A40351"/>
</dbReference>
<dbReference type="PIR" id="S17982">
    <property type="entry name" value="S17982"/>
</dbReference>
<dbReference type="RefSeq" id="NP_000207.2">
    <property type="nucleotide sequence ID" value="NM_000216.4"/>
</dbReference>
<dbReference type="PDB" id="1ZLG">
    <property type="method" value="X-ray"/>
    <property type="chains" value="A=24-680"/>
</dbReference>
<dbReference type="PDBsum" id="1ZLG"/>
<dbReference type="SMR" id="P23352"/>
<dbReference type="BioGRID" id="109933">
    <property type="interactions" value="148"/>
</dbReference>
<dbReference type="CORUM" id="P23352"/>
<dbReference type="FunCoup" id="P23352">
    <property type="interactions" value="71"/>
</dbReference>
<dbReference type="IntAct" id="P23352">
    <property type="interactions" value="137"/>
</dbReference>
<dbReference type="MINT" id="P23352"/>
<dbReference type="STRING" id="9606.ENSP00000262648"/>
<dbReference type="MEROPS" id="I17.004"/>
<dbReference type="GlyCosmos" id="P23352">
    <property type="glycosylation" value="6 sites, No reported glycans"/>
</dbReference>
<dbReference type="GlyGen" id="P23352">
    <property type="glycosylation" value="6 sites, 1 N-linked glycan (1 site)"/>
</dbReference>
<dbReference type="iPTMnet" id="P23352"/>
<dbReference type="PhosphoSitePlus" id="P23352"/>
<dbReference type="BioMuta" id="ANOS1"/>
<dbReference type="DMDM" id="134048661"/>
<dbReference type="jPOST" id="P23352"/>
<dbReference type="MassIVE" id="P23352"/>
<dbReference type="PaxDb" id="9606-ENSP00000262648"/>
<dbReference type="PeptideAtlas" id="P23352"/>
<dbReference type="ProteomicsDB" id="54081"/>
<dbReference type="Pumba" id="P23352"/>
<dbReference type="TopDownProteomics" id="P23352"/>
<dbReference type="Antibodypedia" id="23606">
    <property type="antibodies" value="219 antibodies from 30 providers"/>
</dbReference>
<dbReference type="DNASU" id="3730"/>
<dbReference type="Ensembl" id="ENST00000262648.8">
    <property type="protein sequence ID" value="ENSP00000262648.3"/>
    <property type="gene ID" value="ENSG00000011201.12"/>
</dbReference>
<dbReference type="GeneID" id="3730"/>
<dbReference type="KEGG" id="hsa:3730"/>
<dbReference type="MANE-Select" id="ENST00000262648.8">
    <property type="protein sequence ID" value="ENSP00000262648.3"/>
    <property type="RefSeq nucleotide sequence ID" value="NM_000216.4"/>
    <property type="RefSeq protein sequence ID" value="NP_000207.2"/>
</dbReference>
<dbReference type="UCSC" id="uc004csf.3">
    <property type="organism name" value="human"/>
</dbReference>
<dbReference type="AGR" id="HGNC:6211"/>
<dbReference type="CTD" id="3730"/>
<dbReference type="DisGeNET" id="3730"/>
<dbReference type="GeneCards" id="ANOS1"/>
<dbReference type="GeneReviews" id="ANOS1"/>
<dbReference type="HGNC" id="HGNC:6211">
    <property type="gene designation" value="ANOS1"/>
</dbReference>
<dbReference type="HPA" id="ENSG00000011201">
    <property type="expression patterns" value="Tissue enhanced (lung)"/>
</dbReference>
<dbReference type="MalaCards" id="ANOS1"/>
<dbReference type="MIM" id="300836">
    <property type="type" value="gene"/>
</dbReference>
<dbReference type="MIM" id="308700">
    <property type="type" value="phenotype"/>
</dbReference>
<dbReference type="neXtProt" id="NX_P23352"/>
<dbReference type="OpenTargets" id="ENSG00000011201"/>
<dbReference type="Orphanet" id="478">
    <property type="disease" value="Kallmann syndrome"/>
</dbReference>
<dbReference type="PharmGKB" id="PA30012"/>
<dbReference type="VEuPathDB" id="HostDB:ENSG00000011201"/>
<dbReference type="eggNOG" id="KOG4802">
    <property type="taxonomic scope" value="Eukaryota"/>
</dbReference>
<dbReference type="GeneTree" id="ENSGT00440000033720"/>
<dbReference type="HOGENOM" id="CLU_030264_0_0_1"/>
<dbReference type="InParanoid" id="P23352"/>
<dbReference type="OMA" id="RPHLKHH"/>
<dbReference type="OrthoDB" id="9985779at2759"/>
<dbReference type="PAN-GO" id="P23352">
    <property type="GO annotations" value="2 GO annotations based on evolutionary models"/>
</dbReference>
<dbReference type="PhylomeDB" id="P23352"/>
<dbReference type="TreeFam" id="TF318736"/>
<dbReference type="PathwayCommons" id="P23352"/>
<dbReference type="Reactome" id="R-HSA-190373">
    <property type="pathway name" value="FGFR1c ligand binding and activation"/>
</dbReference>
<dbReference type="Reactome" id="R-HSA-5654726">
    <property type="pathway name" value="Negative regulation of FGFR1 signaling"/>
</dbReference>
<dbReference type="SignaLink" id="P23352"/>
<dbReference type="SIGNOR" id="P23352"/>
<dbReference type="BioGRID-ORCS" id="3730">
    <property type="hits" value="7 hits in 772 CRISPR screens"/>
</dbReference>
<dbReference type="ChiTaRS" id="ANOS1">
    <property type="organism name" value="human"/>
</dbReference>
<dbReference type="EvolutionaryTrace" id="P23352"/>
<dbReference type="GenomeRNAi" id="3730"/>
<dbReference type="Pharos" id="P23352">
    <property type="development level" value="Tbio"/>
</dbReference>
<dbReference type="PRO" id="PR:P23352"/>
<dbReference type="Proteomes" id="UP000005640">
    <property type="component" value="Chromosome X"/>
</dbReference>
<dbReference type="RNAct" id="P23352">
    <property type="molecule type" value="protein"/>
</dbReference>
<dbReference type="Bgee" id="ENSG00000011201">
    <property type="expression patterns" value="Expressed in visceral pleura and 185 other cell types or tissues"/>
</dbReference>
<dbReference type="GO" id="GO:0009986">
    <property type="term" value="C:cell surface"/>
    <property type="evidence" value="ECO:0000318"/>
    <property type="project" value="GO_Central"/>
</dbReference>
<dbReference type="GO" id="GO:0031012">
    <property type="term" value="C:extracellular matrix"/>
    <property type="evidence" value="ECO:0000304"/>
    <property type="project" value="ProtInc"/>
</dbReference>
<dbReference type="GO" id="GO:0005576">
    <property type="term" value="C:extracellular region"/>
    <property type="evidence" value="ECO:0000304"/>
    <property type="project" value="Reactome"/>
</dbReference>
<dbReference type="GO" id="GO:0005615">
    <property type="term" value="C:extracellular space"/>
    <property type="evidence" value="ECO:0000304"/>
    <property type="project" value="ProtInc"/>
</dbReference>
<dbReference type="GO" id="GO:0005886">
    <property type="term" value="C:plasma membrane"/>
    <property type="evidence" value="ECO:0007669"/>
    <property type="project" value="UniProtKB-SubCell"/>
</dbReference>
<dbReference type="GO" id="GO:0005201">
    <property type="term" value="F:extracellular matrix structural constituent"/>
    <property type="evidence" value="ECO:0000304"/>
    <property type="project" value="ProtInc"/>
</dbReference>
<dbReference type="GO" id="GO:0008201">
    <property type="term" value="F:heparin binding"/>
    <property type="evidence" value="ECO:0007669"/>
    <property type="project" value="UniProtKB-KW"/>
</dbReference>
<dbReference type="GO" id="GO:0004867">
    <property type="term" value="F:serine-type endopeptidase inhibitor activity"/>
    <property type="evidence" value="ECO:0007669"/>
    <property type="project" value="UniProtKB-KW"/>
</dbReference>
<dbReference type="GO" id="GO:0007411">
    <property type="term" value="P:axon guidance"/>
    <property type="evidence" value="ECO:0000304"/>
    <property type="project" value="ProtInc"/>
</dbReference>
<dbReference type="GO" id="GO:0007155">
    <property type="term" value="P:cell adhesion"/>
    <property type="evidence" value="ECO:0000304"/>
    <property type="project" value="ProtInc"/>
</dbReference>
<dbReference type="GO" id="GO:0006935">
    <property type="term" value="P:chemotaxis"/>
    <property type="evidence" value="ECO:0000304"/>
    <property type="project" value="ProtInc"/>
</dbReference>
<dbReference type="GO" id="GO:0030182">
    <property type="term" value="P:neuron differentiation"/>
    <property type="evidence" value="ECO:0000318"/>
    <property type="project" value="GO_Central"/>
</dbReference>
<dbReference type="CDD" id="cd00063">
    <property type="entry name" value="FN3"/>
    <property type="match status" value="3"/>
</dbReference>
<dbReference type="CDD" id="cd00199">
    <property type="entry name" value="WAP"/>
    <property type="match status" value="1"/>
</dbReference>
<dbReference type="FunFam" id="2.60.40.10:FF:001414">
    <property type="entry name" value="Anosmin 1"/>
    <property type="match status" value="1"/>
</dbReference>
<dbReference type="FunFam" id="2.60.40.10:FF:001783">
    <property type="entry name" value="Anosmin 1"/>
    <property type="match status" value="1"/>
</dbReference>
<dbReference type="FunFam" id="2.60.40.10:FF:002721">
    <property type="entry name" value="Anosmin 1"/>
    <property type="match status" value="1"/>
</dbReference>
<dbReference type="FunFam" id="4.10.75.10:FF:000001">
    <property type="entry name" value="Anosmin 1"/>
    <property type="match status" value="1"/>
</dbReference>
<dbReference type="Gene3D" id="4.10.75.10">
    <property type="entry name" value="Elafin-like"/>
    <property type="match status" value="1"/>
</dbReference>
<dbReference type="Gene3D" id="2.60.40.10">
    <property type="entry name" value="Immunoglobulins"/>
    <property type="match status" value="3"/>
</dbReference>
<dbReference type="InterPro" id="IPR042447">
    <property type="entry name" value="Anosmin-1"/>
</dbReference>
<dbReference type="InterPro" id="IPR040957">
    <property type="entry name" value="Anosmin-1_Cys_box"/>
</dbReference>
<dbReference type="InterPro" id="IPR036645">
    <property type="entry name" value="Elafin-like_sf"/>
</dbReference>
<dbReference type="InterPro" id="IPR003961">
    <property type="entry name" value="FN3_dom"/>
</dbReference>
<dbReference type="InterPro" id="IPR036116">
    <property type="entry name" value="FN3_sf"/>
</dbReference>
<dbReference type="InterPro" id="IPR013783">
    <property type="entry name" value="Ig-like_fold"/>
</dbReference>
<dbReference type="InterPro" id="IPR008197">
    <property type="entry name" value="WAP_dom"/>
</dbReference>
<dbReference type="PANTHER" id="PTHR14131">
    <property type="entry name" value="ANOSMIN"/>
    <property type="match status" value="1"/>
</dbReference>
<dbReference type="PANTHER" id="PTHR14131:SF5">
    <property type="entry name" value="ANOSMIN-1"/>
    <property type="match status" value="1"/>
</dbReference>
<dbReference type="Pfam" id="PF17869">
    <property type="entry name" value="Cys_box"/>
    <property type="match status" value="1"/>
</dbReference>
<dbReference type="Pfam" id="PF00041">
    <property type="entry name" value="fn3"/>
    <property type="match status" value="3"/>
</dbReference>
<dbReference type="Pfam" id="PF00095">
    <property type="entry name" value="WAP"/>
    <property type="match status" value="1"/>
</dbReference>
<dbReference type="PRINTS" id="PR00003">
    <property type="entry name" value="4DISULPHCORE"/>
</dbReference>
<dbReference type="SMART" id="SM00060">
    <property type="entry name" value="FN3"/>
    <property type="match status" value="4"/>
</dbReference>
<dbReference type="SMART" id="SM00217">
    <property type="entry name" value="WAP"/>
    <property type="match status" value="1"/>
</dbReference>
<dbReference type="SUPFAM" id="SSF57256">
    <property type="entry name" value="Elafin-like"/>
    <property type="match status" value="1"/>
</dbReference>
<dbReference type="SUPFAM" id="SSF49265">
    <property type="entry name" value="Fibronectin type III"/>
    <property type="match status" value="2"/>
</dbReference>
<dbReference type="PROSITE" id="PS50853">
    <property type="entry name" value="FN3"/>
    <property type="match status" value="4"/>
</dbReference>
<dbReference type="PROSITE" id="PS51390">
    <property type="entry name" value="WAP"/>
    <property type="match status" value="1"/>
</dbReference>
<proteinExistence type="evidence at protein level"/>
<organism>
    <name type="scientific">Homo sapiens</name>
    <name type="common">Human</name>
    <dbReference type="NCBI Taxonomy" id="9606"/>
    <lineage>
        <taxon>Eukaryota</taxon>
        <taxon>Metazoa</taxon>
        <taxon>Chordata</taxon>
        <taxon>Craniata</taxon>
        <taxon>Vertebrata</taxon>
        <taxon>Euteleostomi</taxon>
        <taxon>Mammalia</taxon>
        <taxon>Eutheria</taxon>
        <taxon>Euarchontoglires</taxon>
        <taxon>Primates</taxon>
        <taxon>Haplorrhini</taxon>
        <taxon>Catarrhini</taxon>
        <taxon>Hominidae</taxon>
        <taxon>Homo</taxon>
    </lineage>
</organism>
<gene>
    <name evidence="32" type="primary">ANOS1</name>
    <name type="synonym">ADMLX</name>
    <name type="synonym">KAL</name>
    <name type="synonym">KAL1</name>
    <name type="synonym">KALIG1</name>
</gene>
<protein>
    <recommendedName>
        <fullName evidence="30 32">Anosmin-1</fullName>
    </recommendedName>
    <alternativeName>
        <fullName>Adhesion molecule-like X-linked</fullName>
    </alternativeName>
    <alternativeName>
        <fullName evidence="29">Kallmann syndrome protein</fullName>
    </alternativeName>
</protein>
<reference key="1">
    <citation type="journal article" date="1991" name="Cell">
        <title>The candidate gene for the X-linked Kallmann syndrome encodes a protein related to adhesion molecules.</title>
        <authorList>
            <person name="Legouis R."/>
            <person name="Hardelin J.-P."/>
            <person name="Levilliers J."/>
            <person name="Claverie J.-M."/>
            <person name="Compain S."/>
            <person name="Wunderle V."/>
            <person name="Millasseau P."/>
            <person name="le Paslier D."/>
            <person name="Cohen D."/>
            <person name="Caterina D."/>
            <person name="Bougueleret L."/>
            <person name="Delemarre-Van de Waal H."/>
            <person name="Lutfalla G."/>
            <person name="Weissenbach J."/>
            <person name="Petit C."/>
        </authorList>
    </citation>
    <scope>NUCLEOTIDE SEQUENCE [MRNA]</scope>
    <scope>VARIANT ILE-534</scope>
</reference>
<reference key="2">
    <citation type="journal article" date="1992" name="Nat. Genet.">
        <title>Structure of the X-linked Kallmann syndrome gene and its homologous pseudogene on the Y chromosome.</title>
        <authorList>
            <person name="del Castillo I."/>
            <person name="Cohen-Salmon M."/>
            <person name="Blanchard S."/>
            <person name="Lutfalla G."/>
            <person name="Petit C."/>
        </authorList>
    </citation>
    <scope>SEQUENCE REVISION</scope>
</reference>
<reference key="3">
    <citation type="journal article" date="1991" name="Nature">
        <title>A gene deleted in Kallmann's syndrome shares homology with neural cell adhesion and axonal path-finding molecules.</title>
        <authorList>
            <person name="Franco B."/>
            <person name="Guioli S."/>
            <person name="Pragliola A."/>
            <person name="Inceri B."/>
            <person name="Bardoni B."/>
            <person name="Tonlorenzi R."/>
            <person name="Carrozo R."/>
            <person name="Maestrini E."/>
            <person name="Pieretti M."/>
            <person name="Taillon-Miller P."/>
            <person name="Brown C.J."/>
            <person name="Willard H.F."/>
            <person name="Lawrence C."/>
            <person name="Persico N.G."/>
            <person name="Camerino G."/>
            <person name="Ballabio A."/>
        </authorList>
    </citation>
    <scope>NUCLEOTIDE SEQUENCE [MRNA]</scope>
    <scope>VARIANT ILE-534</scope>
</reference>
<reference key="4">
    <citation type="journal article" date="2005" name="Nature">
        <title>The DNA sequence of the human X chromosome.</title>
        <authorList>
            <person name="Ross M.T."/>
            <person name="Grafham D.V."/>
            <person name="Coffey A.J."/>
            <person name="Scherer S."/>
            <person name="McLay K."/>
            <person name="Muzny D."/>
            <person name="Platzer M."/>
            <person name="Howell G.R."/>
            <person name="Burrows C."/>
            <person name="Bird C.P."/>
            <person name="Frankish A."/>
            <person name="Lovell F.L."/>
            <person name="Howe K.L."/>
            <person name="Ashurst J.L."/>
            <person name="Fulton R.S."/>
            <person name="Sudbrak R."/>
            <person name="Wen G."/>
            <person name="Jones M.C."/>
            <person name="Hurles M.E."/>
            <person name="Andrews T.D."/>
            <person name="Scott C.E."/>
            <person name="Searle S."/>
            <person name="Ramser J."/>
            <person name="Whittaker A."/>
            <person name="Deadman R."/>
            <person name="Carter N.P."/>
            <person name="Hunt S.E."/>
            <person name="Chen R."/>
            <person name="Cree A."/>
            <person name="Gunaratne P."/>
            <person name="Havlak P."/>
            <person name="Hodgson A."/>
            <person name="Metzker M.L."/>
            <person name="Richards S."/>
            <person name="Scott G."/>
            <person name="Steffen D."/>
            <person name="Sodergren E."/>
            <person name="Wheeler D.A."/>
            <person name="Worley K.C."/>
            <person name="Ainscough R."/>
            <person name="Ambrose K.D."/>
            <person name="Ansari-Lari M.A."/>
            <person name="Aradhya S."/>
            <person name="Ashwell R.I."/>
            <person name="Babbage A.K."/>
            <person name="Bagguley C.L."/>
            <person name="Ballabio A."/>
            <person name="Banerjee R."/>
            <person name="Barker G.E."/>
            <person name="Barlow K.F."/>
            <person name="Barrett I.P."/>
            <person name="Bates K.N."/>
            <person name="Beare D.M."/>
            <person name="Beasley H."/>
            <person name="Beasley O."/>
            <person name="Beck A."/>
            <person name="Bethel G."/>
            <person name="Blechschmidt K."/>
            <person name="Brady N."/>
            <person name="Bray-Allen S."/>
            <person name="Bridgeman A.M."/>
            <person name="Brown A.J."/>
            <person name="Brown M.J."/>
            <person name="Bonnin D."/>
            <person name="Bruford E.A."/>
            <person name="Buhay C."/>
            <person name="Burch P."/>
            <person name="Burford D."/>
            <person name="Burgess J."/>
            <person name="Burrill W."/>
            <person name="Burton J."/>
            <person name="Bye J.M."/>
            <person name="Carder C."/>
            <person name="Carrel L."/>
            <person name="Chako J."/>
            <person name="Chapman J.C."/>
            <person name="Chavez D."/>
            <person name="Chen E."/>
            <person name="Chen G."/>
            <person name="Chen Y."/>
            <person name="Chen Z."/>
            <person name="Chinault C."/>
            <person name="Ciccodicola A."/>
            <person name="Clark S.Y."/>
            <person name="Clarke G."/>
            <person name="Clee C.M."/>
            <person name="Clegg S."/>
            <person name="Clerc-Blankenburg K."/>
            <person name="Clifford K."/>
            <person name="Cobley V."/>
            <person name="Cole C.G."/>
            <person name="Conquer J.S."/>
            <person name="Corby N."/>
            <person name="Connor R.E."/>
            <person name="David R."/>
            <person name="Davies J."/>
            <person name="Davis C."/>
            <person name="Davis J."/>
            <person name="Delgado O."/>
            <person name="Deshazo D."/>
            <person name="Dhami P."/>
            <person name="Ding Y."/>
            <person name="Dinh H."/>
            <person name="Dodsworth S."/>
            <person name="Draper H."/>
            <person name="Dugan-Rocha S."/>
            <person name="Dunham A."/>
            <person name="Dunn M."/>
            <person name="Durbin K.J."/>
            <person name="Dutta I."/>
            <person name="Eades T."/>
            <person name="Ellwood M."/>
            <person name="Emery-Cohen A."/>
            <person name="Errington H."/>
            <person name="Evans K.L."/>
            <person name="Faulkner L."/>
            <person name="Francis F."/>
            <person name="Frankland J."/>
            <person name="Fraser A.E."/>
            <person name="Galgoczy P."/>
            <person name="Gilbert J."/>
            <person name="Gill R."/>
            <person name="Gloeckner G."/>
            <person name="Gregory S.G."/>
            <person name="Gribble S."/>
            <person name="Griffiths C."/>
            <person name="Grocock R."/>
            <person name="Gu Y."/>
            <person name="Gwilliam R."/>
            <person name="Hamilton C."/>
            <person name="Hart E.A."/>
            <person name="Hawes A."/>
            <person name="Heath P.D."/>
            <person name="Heitmann K."/>
            <person name="Hennig S."/>
            <person name="Hernandez J."/>
            <person name="Hinzmann B."/>
            <person name="Ho S."/>
            <person name="Hoffs M."/>
            <person name="Howden P.J."/>
            <person name="Huckle E.J."/>
            <person name="Hume J."/>
            <person name="Hunt P.J."/>
            <person name="Hunt A.R."/>
            <person name="Isherwood J."/>
            <person name="Jacob L."/>
            <person name="Johnson D."/>
            <person name="Jones S."/>
            <person name="de Jong P.J."/>
            <person name="Joseph S.S."/>
            <person name="Keenan S."/>
            <person name="Kelly S."/>
            <person name="Kershaw J.K."/>
            <person name="Khan Z."/>
            <person name="Kioschis P."/>
            <person name="Klages S."/>
            <person name="Knights A.J."/>
            <person name="Kosiura A."/>
            <person name="Kovar-Smith C."/>
            <person name="Laird G.K."/>
            <person name="Langford C."/>
            <person name="Lawlor S."/>
            <person name="Leversha M."/>
            <person name="Lewis L."/>
            <person name="Liu W."/>
            <person name="Lloyd C."/>
            <person name="Lloyd D.M."/>
            <person name="Loulseged H."/>
            <person name="Loveland J.E."/>
            <person name="Lovell J.D."/>
            <person name="Lozado R."/>
            <person name="Lu J."/>
            <person name="Lyne R."/>
            <person name="Ma J."/>
            <person name="Maheshwari M."/>
            <person name="Matthews L.H."/>
            <person name="McDowall J."/>
            <person name="McLaren S."/>
            <person name="McMurray A."/>
            <person name="Meidl P."/>
            <person name="Meitinger T."/>
            <person name="Milne S."/>
            <person name="Miner G."/>
            <person name="Mistry S.L."/>
            <person name="Morgan M."/>
            <person name="Morris S."/>
            <person name="Mueller I."/>
            <person name="Mullikin J.C."/>
            <person name="Nguyen N."/>
            <person name="Nordsiek G."/>
            <person name="Nyakatura G."/>
            <person name="O'dell C.N."/>
            <person name="Okwuonu G."/>
            <person name="Palmer S."/>
            <person name="Pandian R."/>
            <person name="Parker D."/>
            <person name="Parrish J."/>
            <person name="Pasternak S."/>
            <person name="Patel D."/>
            <person name="Pearce A.V."/>
            <person name="Pearson D.M."/>
            <person name="Pelan S.E."/>
            <person name="Perez L."/>
            <person name="Porter K.M."/>
            <person name="Ramsey Y."/>
            <person name="Reichwald K."/>
            <person name="Rhodes S."/>
            <person name="Ridler K.A."/>
            <person name="Schlessinger D."/>
            <person name="Schueler M.G."/>
            <person name="Sehra H.K."/>
            <person name="Shaw-Smith C."/>
            <person name="Shen H."/>
            <person name="Sheridan E.M."/>
            <person name="Shownkeen R."/>
            <person name="Skuce C.D."/>
            <person name="Smith M.L."/>
            <person name="Sotheran E.C."/>
            <person name="Steingruber H.E."/>
            <person name="Steward C.A."/>
            <person name="Storey R."/>
            <person name="Swann R.M."/>
            <person name="Swarbreck D."/>
            <person name="Tabor P.E."/>
            <person name="Taudien S."/>
            <person name="Taylor T."/>
            <person name="Teague B."/>
            <person name="Thomas K."/>
            <person name="Thorpe A."/>
            <person name="Timms K."/>
            <person name="Tracey A."/>
            <person name="Trevanion S."/>
            <person name="Tromans A.C."/>
            <person name="d'Urso M."/>
            <person name="Verduzco D."/>
            <person name="Villasana D."/>
            <person name="Waldron L."/>
            <person name="Wall M."/>
            <person name="Wang Q."/>
            <person name="Warren J."/>
            <person name="Warry G.L."/>
            <person name="Wei X."/>
            <person name="West A."/>
            <person name="Whitehead S.L."/>
            <person name="Whiteley M.N."/>
            <person name="Wilkinson J.E."/>
            <person name="Willey D.L."/>
            <person name="Williams G."/>
            <person name="Williams L."/>
            <person name="Williamson A."/>
            <person name="Williamson H."/>
            <person name="Wilming L."/>
            <person name="Woodmansey R.L."/>
            <person name="Wray P.W."/>
            <person name="Yen J."/>
            <person name="Zhang J."/>
            <person name="Zhou J."/>
            <person name="Zoghbi H."/>
            <person name="Zorilla S."/>
            <person name="Buck D."/>
            <person name="Reinhardt R."/>
            <person name="Poustka A."/>
            <person name="Rosenthal A."/>
            <person name="Lehrach H."/>
            <person name="Meindl A."/>
            <person name="Minx P.J."/>
            <person name="Hillier L.W."/>
            <person name="Willard H.F."/>
            <person name="Wilson R.K."/>
            <person name="Waterston R.H."/>
            <person name="Rice C.M."/>
            <person name="Vaudin M."/>
            <person name="Coulson A."/>
            <person name="Nelson D.L."/>
            <person name="Weinstock G."/>
            <person name="Sulston J.E."/>
            <person name="Durbin R.M."/>
            <person name="Hubbard T."/>
            <person name="Gibbs R.A."/>
            <person name="Beck S."/>
            <person name="Rogers J."/>
            <person name="Bentley D.R."/>
        </authorList>
    </citation>
    <scope>NUCLEOTIDE SEQUENCE [LARGE SCALE GENOMIC DNA]</scope>
</reference>
<reference key="5">
    <citation type="submission" date="2005-07" db="EMBL/GenBank/DDBJ databases">
        <authorList>
            <person name="Mural R.J."/>
            <person name="Istrail S."/>
            <person name="Sutton G.G."/>
            <person name="Florea L."/>
            <person name="Halpern A.L."/>
            <person name="Mobarry C.M."/>
            <person name="Lippert R."/>
            <person name="Walenz B."/>
            <person name="Shatkay H."/>
            <person name="Dew I."/>
            <person name="Miller J.R."/>
            <person name="Flanigan M.J."/>
            <person name="Edwards N.J."/>
            <person name="Bolanos R."/>
            <person name="Fasulo D."/>
            <person name="Halldorsson B.V."/>
            <person name="Hannenhalli S."/>
            <person name="Turner R."/>
            <person name="Yooseph S."/>
            <person name="Lu F."/>
            <person name="Nusskern D.R."/>
            <person name="Shue B.C."/>
            <person name="Zheng X.H."/>
            <person name="Zhong F."/>
            <person name="Delcher A.L."/>
            <person name="Huson D.H."/>
            <person name="Kravitz S.A."/>
            <person name="Mouchard L."/>
            <person name="Reinert K."/>
            <person name="Remington K.A."/>
            <person name="Clark A.G."/>
            <person name="Waterman M.S."/>
            <person name="Eichler E.E."/>
            <person name="Adams M.D."/>
            <person name="Hunkapiller M.W."/>
            <person name="Myers E.W."/>
            <person name="Venter J.C."/>
        </authorList>
    </citation>
    <scope>NUCLEOTIDE SEQUENCE [LARGE SCALE GENOMIC DNA]</scope>
    <scope>VARIANT ILE-534</scope>
</reference>
<reference key="6">
    <citation type="journal article" date="2004" name="Genome Res.">
        <title>The status, quality, and expansion of the NIH full-length cDNA project: the Mammalian Gene Collection (MGC).</title>
        <authorList>
            <consortium name="The MGC Project Team"/>
        </authorList>
    </citation>
    <scope>NUCLEOTIDE SEQUENCE [LARGE SCALE MRNA]</scope>
    <scope>VARIANT ILE-534</scope>
    <source>
        <tissue>Brain</tissue>
    </source>
</reference>
<reference key="7">
    <citation type="journal article" date="1995" name="Gene">
        <title>Characterization of the promoter of the human KAL gene, responsible for the X-chromosome-linked Kallmann syndrome.</title>
        <authorList>
            <person name="Cohen-Salmon M."/>
            <person name="Tronche F."/>
            <person name="del Castillo I."/>
            <person name="Petit C."/>
        </authorList>
    </citation>
    <scope>NUCLEOTIDE SEQUENCE [GENOMIC DNA] OF 1-71</scope>
</reference>
<reference key="8">
    <citation type="journal article" date="1996" name="Hum. Mol. Genet.">
        <title>The Kallmann syndrome gene product expressed in COS cells is cleaved on the cell surface to yield a diffusible component.</title>
        <authorList>
            <person name="Rugarli E.I."/>
            <person name="Ghezzi C."/>
            <person name="Valsecchi V."/>
            <person name="Ballabio A."/>
        </authorList>
    </citation>
    <scope>SUBCELLULAR LOCATION</scope>
    <scope>GLYCOSYLATION</scope>
    <scope>PROTEOLYTIC CLEAVAGE</scope>
</reference>
<reference key="9">
    <citation type="journal article" date="1996" name="J. Cell Sci.">
        <title>Initial characterization of anosmin-1, a putative extracellular matrix protein synthesized by definite neuronal cell populations in the central nervous system.</title>
        <authorList>
            <person name="Soussi-Yanicostas N."/>
            <person name="Hardelin J.-P."/>
            <person name="del Mar Arroyo-Jimenez M."/>
            <person name="Ardouin O."/>
            <person name="Legouis R."/>
            <person name="Levilliers J."/>
            <person name="Traincard F."/>
            <person name="Betton J.-M."/>
            <person name="Cabanie L."/>
            <person name="Petit C."/>
        </authorList>
    </citation>
    <scope>CHARACTERIZATION</scope>
</reference>
<reference key="10">
    <citation type="journal article" date="2002" name="Cell">
        <title>Anosmin-1, defective in the X-linked form of Kallmann syndrome, promotes axonal branch formation from olfactory bulb output neurons.</title>
        <authorList>
            <person name="Soussi-Yanicostas N."/>
            <person name="de Castro F."/>
            <person name="Julliard A.K."/>
            <person name="Perfettini I."/>
            <person name="Chedotal A."/>
            <person name="Petit C."/>
        </authorList>
    </citation>
    <scope>TISSUE SPECIFICITY</scope>
</reference>
<reference key="11">
    <citation type="journal article" date="2009" name="J. Biol. Chem.">
        <title>Novel mechanisms of fibroblast growth factor receptor 1 regulation by extracellular matrix protein anosmin-1.</title>
        <authorList>
            <person name="Hu Y."/>
            <person name="Guimond S.E."/>
            <person name="Travers P."/>
            <person name="Cadman S."/>
            <person name="Hohenester E."/>
            <person name="Turnbull J.E."/>
            <person name="Kim S.H."/>
            <person name="Bouloux P.M."/>
        </authorList>
    </citation>
    <scope>FUNCTION</scope>
    <scope>INTERACTION WITH FGFR1</scope>
    <scope>CHARACTERIZATION OF VARIANTS HH1 LYS-267; LYS-514 AND LEU-517</scope>
    <scope>HEPARIN-BINDING</scope>
</reference>
<reference key="12">
    <citation type="journal article" date="2005" name="J. Mol. Biol.">
        <title>Extended and flexible domain solution structure of the extracellular matrix protein anosmin-1 by X-ray scattering, analytical ultracentrifugation and constrained modelling.</title>
        <authorList>
            <person name="Hu Y."/>
            <person name="Sun Z."/>
            <person name="Eaton J.T."/>
            <person name="Bouloux P.M."/>
            <person name="Perkins S.J."/>
        </authorList>
    </citation>
    <scope>X-RAY SCATTERING SOLUTION STRUCTURE OF 24-680</scope>
    <scope>DISULFIDE BONDS</scope>
</reference>
<reference key="13">
    <citation type="journal article" date="1993" name="Hum. Mol. Genet.">
        <title>Heterogeneity in the mutations responsible for X chromosome-linked Kallmann syndrome.</title>
        <authorList>
            <person name="Hardelin J.-P."/>
            <person name="Levilliers J."/>
            <person name="Blanchard S."/>
            <person name="Carel J.-C."/>
            <person name="Leutenegger M."/>
            <person name="Pinard-Bertelletto J.-P."/>
            <person name="Bouloux P."/>
            <person name="Petit C."/>
        </authorList>
    </citation>
    <scope>VARIANT HH1 LYS-267</scope>
    <scope>VARIANT ILE-534</scope>
</reference>
<reference key="14">
    <citation type="journal article" date="1997" name="J. Clin. Endocrinol. Metab.">
        <title>Genetic heterogeneity evidenced by low incidence of KAL-1 gene mutations in sporadic cases of gonadotropin-releasing hormone deficiency.</title>
        <authorList>
            <person name="Georgopoulos N.A."/>
            <person name="Pralong F.P."/>
            <person name="Seidman C.E."/>
            <person name="Seidman J.G."/>
            <person name="Crowley W.F. Jr."/>
            <person name="Vallejo M."/>
        </authorList>
    </citation>
    <scope>VARIANT HH1 LEU-517</scope>
    <scope>VARIANTS ILE-534 AND HIS-668</scope>
</reference>
<reference key="15">
    <citation type="journal article" date="1998" name="J. Clin. Endocrinol. Metab.">
        <title>A recurrent missense mutation in the KAL gene in patients with X-linked Kallmann's syndrome.</title>
        <authorList>
            <person name="Maya-Nunez G."/>
            <person name="Zenteno J.C."/>
            <person name="Ulloa-Aguirre A."/>
            <person name="Kofman-Alfaro S."/>
            <person name="Mendez J.P."/>
        </authorList>
    </citation>
    <scope>VARIANT HH1 LYS-514</scope>
    <scope>VARIANT ILE-534</scope>
</reference>
<reference key="16">
    <citation type="journal article" date="2001" name="J. Clin. Endocrinol. Metab.">
        <title>The importance of autosomal genes in Kallmann syndrome: genotype-phenotype correlations and neuroendocrine characteristics.</title>
        <authorList>
            <person name="Oliveira L.M.B."/>
            <person name="Seminara S.B."/>
            <person name="Beranova M."/>
            <person name="Hayes F.J."/>
            <person name="Valkenburgh S.B."/>
            <person name="Schipani E."/>
            <person name="Costa E.M.F."/>
            <person name="Latronico A.C."/>
            <person name="Crowley W.F. Jr."/>
            <person name="Vallejo M."/>
        </authorList>
    </citation>
    <scope>VARIANT HH1 ARG-172</scope>
    <scope>VARIANT ILE-534</scope>
</reference>
<reference key="17">
    <citation type="journal article" date="2004" name="Hum. Mol. Genet.">
        <title>The product of X-linked Kallmann's syndrome gene (KAL1) affects the migratory activity of gonadotropin-releasing hormone (GnRH)-producing neurons.</title>
        <authorList>
            <person name="Cariboni A."/>
            <person name="Pimpinelli F."/>
            <person name="Colamarino S."/>
            <person name="Zaninetti R."/>
            <person name="Piccolella M."/>
            <person name="Rumio C."/>
            <person name="Piva F."/>
            <person name="Rugarli E.I."/>
            <person name="Maggi R."/>
        </authorList>
    </citation>
    <scope>CHARACTERIZATION OF VARIANTS HH1 LYS-267; LYS-514 AND LEU-517</scope>
</reference>
<reference key="18">
    <citation type="journal article" date="2004" name="J. Clin. Endocrinol. Metab.">
        <title>Clinical assessment and mutation analysis of Kallmann syndrome 1 (KAL1) and fibroblast growth factor receptor 1 (FGFR1, or KAL2) in five families and 18 sporadic patients.</title>
        <authorList>
            <person name="Sato N."/>
            <person name="Katsumata N."/>
            <person name="Kagami M."/>
            <person name="Hasegawa T."/>
            <person name="Hori N."/>
            <person name="Kawakita S."/>
            <person name="Minowada S."/>
            <person name="Shimotsuka A."/>
            <person name="Shishiba Y."/>
            <person name="Yokozawa M."/>
            <person name="Yasuda T."/>
            <person name="Nagasaki K."/>
            <person name="Hasegawa D."/>
            <person name="Hasegawa Y."/>
            <person name="Tachibana K."/>
            <person name="Naiki Y."/>
            <person name="Horikawa R."/>
            <person name="Tanaka T."/>
            <person name="Ogata T."/>
        </authorList>
    </citation>
    <scope>VARIANT HH1 TYR-163</scope>
    <scope>VARIANT ILE-534</scope>
</reference>
<reference key="19">
    <citation type="journal article" date="2005" name="Hum. Mutat.">
        <title>Kallmann syndrome: 14 novel mutations in KAL1 and FGFR1 (KAL2).</title>
        <authorList>
            <person name="Albuisson J."/>
            <person name="Pecheux C."/>
            <person name="Carel J.-C."/>
            <person name="Lacombe D."/>
            <person name="Leheup B."/>
            <person name="Lapuzina P."/>
            <person name="Bouchard P."/>
            <person name="Legius E."/>
            <person name="Matthijs G."/>
            <person name="Wasniewska M."/>
            <person name="Delpech M."/>
            <person name="Young J."/>
            <person name="Hardelin J.-P."/>
            <person name="Dode C."/>
        </authorList>
    </citation>
    <scope>VARIANTS HH1 PRO-262 AND ARG-571</scope>
</reference>
<reference key="20">
    <citation type="journal article" date="2006" name="PLoS Genet.">
        <title>Kallmann syndrome: mutations in the genes encoding prokineticin-2 and prokineticin receptor-2.</title>
        <authorList>
            <person name="Dode C."/>
            <person name="Teixeira L."/>
            <person name="Levilliers J."/>
            <person name="Fouveaut C."/>
            <person name="Bouchard P."/>
            <person name="Kottler M.-L."/>
            <person name="Lespinasse J."/>
            <person name="Lienhardt-Roussie A."/>
            <person name="Mathieu M."/>
            <person name="Moerman A."/>
            <person name="Morgan G."/>
            <person name="Murat A."/>
            <person name="Toublanc J.-E."/>
            <person name="Wolczynski S."/>
            <person name="Delpech M."/>
            <person name="Petit C."/>
            <person name="Young J."/>
            <person name="Hardelin J.-P."/>
        </authorList>
    </citation>
    <scope>VARIANT HH1 LEU-396</scope>
</reference>
<reference key="21">
    <citation type="journal article" date="2007" name="Clin. Endocrinol. (Oxf.)">
        <title>Clinical assessment and molecular analysis of GnRHR and KAL1 genes in males with idiopathic hypogonadotrophic hypogonadism.</title>
        <authorList>
            <person name="Versiani B.R."/>
            <person name="Trarbach E."/>
            <person name="Koenigkam-Santos M."/>
            <person name="dos Santos A.C."/>
            <person name="Elias L.L.K."/>
            <person name="Moreira A.C."/>
            <person name="Latronico A.C."/>
            <person name="de Castro M."/>
        </authorList>
    </citation>
    <scope>VARIANT HH1 SER-304</scope>
    <scope>VARIANT ILE-534</scope>
</reference>
<reference key="22">
    <citation type="journal article" date="2007" name="Mol. Hum. Reprod.">
        <title>KAL1 mutations are not a common cause of idiopathic hypogonadotrophic hypogonadism in humans.</title>
        <authorList>
            <person name="Bhagavath B."/>
            <person name="Xu N."/>
            <person name="Ozata M."/>
            <person name="Rosenfield R.L."/>
            <person name="Bick D.P."/>
            <person name="Sherins R.J."/>
            <person name="Layman L.C."/>
        </authorList>
    </citation>
    <scope>VARIANT HH1 CYS-163 DEL</scope>
    <scope>VARIANTS MET-666 AND HIS-668</scope>
</reference>
<reference key="23">
    <citation type="journal article" date="2011" name="Fertil. Steril.">
        <title>A fertile male patient with Kallmann syndrome and two missense mutations in the KAL1 gene.</title>
        <authorList>
            <person name="Zhang S."/>
            <person name="Wang T."/>
            <person name="Yang J."/>
            <person name="Liu Z."/>
            <person name="Wang S."/>
            <person name="Liu J."/>
        </authorList>
    </citation>
    <scope>VARIANTS HH1 LYS-514 AND LYS-539</scope>
</reference>
<reference key="24">
    <citation type="journal article" date="2011" name="J. Endocrinol. Invest.">
        <title>Identification of two novel missense mutations in the KAL1 gene in Han Chinese subjects with Kallmann Syndrome.</title>
        <authorList>
            <person name="Jap T.S."/>
            <person name="Chiu C.Y."/>
            <person name="Lirng J.F."/>
            <person name="Won G.S."/>
        </authorList>
    </citation>
    <scope>VARIANTS HH1 GLY-134 AND ARG-163</scope>
</reference>
<reference key="25">
    <citation type="journal article" date="2012" name="PLoS Genet.">
        <title>SEMA3A, a gene involved in axonal pathfinding, is mutated in patients with Kallmann syndrome.</title>
        <authorList>
            <person name="Hanchate N.K."/>
            <person name="Giacobini P."/>
            <person name="Lhuillier P."/>
            <person name="Parkash J."/>
            <person name="Espy C."/>
            <person name="Fouveaut C."/>
            <person name="Leroy C."/>
            <person name="Baron S."/>
            <person name="Campagne C."/>
            <person name="Vanacker C."/>
            <person name="Collier F."/>
            <person name="Cruaud C."/>
            <person name="Meyer V."/>
            <person name="Garcia-Pinero A."/>
            <person name="Dewailly D."/>
            <person name="Cortet-Rudelli C."/>
            <person name="Gersak K."/>
            <person name="Metz C."/>
            <person name="Chabrier G."/>
            <person name="Pugeat M."/>
            <person name="Young J."/>
            <person name="Hardelin J.P."/>
            <person name="Prevot V."/>
            <person name="Dode C."/>
        </authorList>
    </citation>
    <scope>VARIANT ASP-217</scope>
</reference>
<reference key="26">
    <citation type="journal article" date="2013" name="Am. J. Hum. Genet.">
        <title>Mutations in FGF17, IL17RD, DUSP6, SPRY4, and FLRT3 are identified in individuals with congenital hypogonadotropic hypogonadism.</title>
        <authorList>
            <person name="Miraoui H."/>
            <person name="Dwyer A.A."/>
            <person name="Sykiotis G.P."/>
            <person name="Plummer L."/>
            <person name="Chung W."/>
            <person name="Feng B."/>
            <person name="Beenken A."/>
            <person name="Clarke J."/>
            <person name="Pers T.H."/>
            <person name="Dworzynski P."/>
            <person name="Keefe K."/>
            <person name="Niedziela M."/>
            <person name="Raivio T."/>
            <person name="Crowley W.F. Jr."/>
            <person name="Seminara S.B."/>
            <person name="Quinton R."/>
            <person name="Hughes V.A."/>
            <person name="Kumanov P."/>
            <person name="Young J."/>
            <person name="Yialamas M.A."/>
            <person name="Hall J.E."/>
            <person name="Van Vliet G."/>
            <person name="Chanoine J.P."/>
            <person name="Rubenstein J."/>
            <person name="Mohammadi M."/>
            <person name="Tsai P.S."/>
            <person name="Sidis Y."/>
            <person name="Lage K."/>
            <person name="Pitteloud N."/>
        </authorList>
    </citation>
    <scope>VARIANT HH1 LEU-587</scope>
</reference>
<reference key="27">
    <citation type="journal article" date="2014" name="J. Clin. Endocrinol. Metab.">
        <title>The prevalence of CHD7 missense versus truncating mutations is higher in patients with Kallmann syndrome than in typical CHARGE patients.</title>
        <authorList>
            <person name="Marcos S."/>
            <person name="Sarfati J."/>
            <person name="Leroy C."/>
            <person name="Fouveaut C."/>
            <person name="Parent P."/>
            <person name="Metz C."/>
            <person name="Wolczynski S."/>
            <person name="Gerard M."/>
            <person name="Bieth E."/>
            <person name="Kurtz F."/>
            <person name="Verier-Mine O."/>
            <person name="Perrin L."/>
            <person name="Archambeaud F."/>
            <person name="Cabrol S."/>
            <person name="Rodien P."/>
            <person name="Hove H."/>
            <person name="Prescott T."/>
            <person name="Lacombe D."/>
            <person name="Christin-Maitre S."/>
            <person name="Touraine P."/>
            <person name="Hieronimus S."/>
            <person name="Dewailly D."/>
            <person name="Young J."/>
            <person name="Pugeat M."/>
            <person name="Hardelin J.P."/>
            <person name="Dode C."/>
        </authorList>
    </citation>
    <scope>VARIANTS HH1 LEU-396 AND ARG-672</scope>
</reference>
<comment type="function">
    <text evidence="1 18">Has a dual branch-promoting and guidance activity, which may play an important role in the patterning of mitral and tufted cell collaterals to the olfactory cortex (By similarity). Chemoattractant for fetal olfactory epithelial cells.</text>
</comment>
<comment type="subunit">
    <text evidence="18">Interacts with FGFR1; this interaction does not interfere with FGF2-binding to FGFR1. Binds heparin. Heparin may promote or interfere with ANOS1-FGFR1-FGF2 complex formation depending on the sequential order of its binding to the various constituents. For instance, heparin-ANOS1 interaction favors subsequent binding to pre-existing binary FGFR1-FGF2 complex, while heparin-FGF2 complex does not interact with ANOS1-FGFR1.</text>
</comment>
<comment type="interaction">
    <interactant intactId="EBI-5272188">
        <id>P23352</id>
    </interactant>
    <interactant intactId="EBI-1028277">
        <id>P11362</id>
        <label>FGFR1</label>
    </interactant>
    <organismsDiffer>false</organismsDiffer>
    <experiments>7</experiments>
</comment>
<comment type="interaction">
    <interactant intactId="EBI-5272188">
        <id>P23352</id>
    </interactant>
    <interactant intactId="EBI-749635">
        <id>P61601</id>
        <label>NCALD</label>
    </interactant>
    <organismsDiffer>false</organismsDiffer>
    <experiments>3</experiments>
</comment>
<comment type="interaction">
    <interactant intactId="EBI-5272188">
        <id>P23352</id>
    </interactant>
    <interactant intactId="EBI-741480">
        <id>Q9UMX0</id>
        <label>UBQLN1</label>
    </interactant>
    <organismsDiffer>false</organismsDiffer>
    <experiments>3</experiments>
</comment>
<comment type="subcellular location">
    <subcellularLocation>
        <location evidence="25">Cell membrane</location>
        <topology evidence="25">Peripheral membrane protein</topology>
    </subcellularLocation>
    <subcellularLocation>
        <location evidence="25">Secreted</location>
    </subcellularLocation>
    <text>Proteolytic cleavage may release it from the cell surface into the extracellular space.</text>
</comment>
<comment type="tissue specificity">
    <text evidence="7">Expressed in the cerebellum (at protein level).</text>
</comment>
<comment type="PTM">
    <text evidence="25">N-glycosylated.</text>
</comment>
<comment type="PTM">
    <text evidence="25">May be proteolytically cleaved at the cell surface and released from the cell surface.</text>
</comment>
<comment type="disease" evidence="6 8 9 11 13 14 15 18 19 20 22 23 24 26 27">
    <disease id="DI-00617">
        <name>Hypogonadotropic hypogonadism 1 with or without anosmia</name>
        <acronym>HH1</acronym>
        <description>A disorder characterized by absent or incomplete sexual maturation by the age of 18 years, in conjunction with low levels of circulating gonadotropins and testosterone and no other abnormalities of the hypothalamic-pituitary axis. In some cases, it is associated with non-reproductive phenotypes, such as anosmia, cleft palate, and sensorineural hearing loss. Anosmia or hyposmia is related to the absence or hypoplasia of the olfactory bulbs and tracts. Hypogonadism is due to deficiency in gonadotropin-releasing hormone and probably results from a failure of embryonic migration of gonadotropin-releasing hormone-synthesizing neurons. In the presence of anosmia, idiopathic hypogonadotropic hypogonadism is referred to as Kallmann syndrome, whereas in the presence of a normal sense of smell, it has been termed normosmic idiopathic hypogonadotropic hypogonadism (nIHH).</description>
        <dbReference type="MIM" id="308700"/>
    </disease>
    <text evidence="22">The disease is caused by variants affecting distinct genetic loci, including the gene represented in this entry. The genetics of hypogonadotropic hypogonadism involves various modes of transmission. Oligogenic inheritance has been reported in some patients carrying mutations in ANOS1 as well as in other HH-associated genes including FGFR1 and TACR3 (PubMed:23643382).</text>
</comment>
<feature type="signal peptide" evidence="2">
    <location>
        <begin position="1"/>
        <end position="24"/>
    </location>
</feature>
<feature type="chain" id="PRO_0000041395" description="Anosmin-1">
    <location>
        <begin position="25"/>
        <end position="680"/>
    </location>
</feature>
<feature type="domain" description="WAP" evidence="4">
    <location>
        <begin position="127"/>
        <end position="176"/>
    </location>
</feature>
<feature type="domain" description="Fibronectin type-III 1" evidence="3">
    <location>
        <begin position="186"/>
        <end position="287"/>
    </location>
</feature>
<feature type="domain" description="Fibronectin type-III 2" evidence="3">
    <location>
        <begin position="292"/>
        <end position="400"/>
    </location>
</feature>
<feature type="domain" description="Fibronectin type-III 3" evidence="3">
    <location>
        <begin position="425"/>
        <end position="523"/>
    </location>
</feature>
<feature type="domain" description="Fibronectin type-III 4" evidence="3">
    <location>
        <begin position="550"/>
        <end position="658"/>
    </location>
</feature>
<feature type="region of interest" description="Disordered" evidence="5">
    <location>
        <begin position="642"/>
        <end position="680"/>
    </location>
</feature>
<feature type="compositionally biased region" description="Basic residues" evidence="5">
    <location>
        <begin position="661"/>
        <end position="674"/>
    </location>
</feature>
<feature type="glycosylation site" description="N-linked (GlcNAc...) asparagine" evidence="2">
    <location>
        <position position="71"/>
    </location>
</feature>
<feature type="glycosylation site" description="N-linked (GlcNAc...) asparagine" evidence="2">
    <location>
        <position position="209"/>
    </location>
</feature>
<feature type="glycosylation site" description="N-linked (GlcNAc...) asparagine" evidence="2">
    <location>
        <position position="300"/>
    </location>
</feature>
<feature type="glycosylation site" description="N-linked (GlcNAc...) asparagine" evidence="2">
    <location>
        <position position="470"/>
    </location>
</feature>
<feature type="glycosylation site" description="N-linked (GlcNAc...) asparagine" evidence="2">
    <location>
        <position position="553"/>
    </location>
</feature>
<feature type="glycosylation site" description="N-linked (GlcNAc...) asparagine" evidence="2">
    <location>
        <position position="564"/>
    </location>
</feature>
<feature type="disulfide bond" evidence="4 12">
    <location>
        <begin position="49"/>
        <end position="83"/>
    </location>
</feature>
<feature type="disulfide bond" evidence="4 12">
    <location>
        <begin position="53"/>
        <end position="77"/>
    </location>
</feature>
<feature type="disulfide bond" evidence="4 12">
    <location>
        <begin position="86"/>
        <end position="105"/>
    </location>
</feature>
<feature type="disulfide bond" evidence="4 12">
    <location>
        <begin position="90"/>
        <end position="101"/>
    </location>
</feature>
<feature type="disulfide bond" evidence="4 12">
    <location>
        <begin position="116"/>
        <end position="120"/>
    </location>
</feature>
<feature type="sequence variant" id="VAR_065362" description="In HH1; phenotype consistent with Kallmann syndrome; dbSNP:rs2146827187." evidence="19">
    <original>C</original>
    <variation>G</variation>
    <location>
        <position position="134"/>
    </location>
</feature>
<feature type="sequence variant" id="VAR_065363" description="In HH1; phenotype consistent with Kallmann syndrome." evidence="19">
    <original>C</original>
    <variation>R</variation>
    <location>
        <position position="163"/>
    </location>
</feature>
<feature type="sequence variant" id="VAR_031012" description="In HH1; phenotype consistent with Kallmann syndrome." evidence="8">
    <original>C</original>
    <variation>Y</variation>
    <location>
        <position position="163"/>
    </location>
</feature>
<feature type="sequence variant" id="VAR_031011" description="In HH1; phenotype consistent with Kallmann syndrome." evidence="14">
    <location>
        <position position="163"/>
    </location>
</feature>
<feature type="sequence variant" id="VAR_031013" description="In HH1; phenotype consistent with Kallmann syndrome; dbSNP:rs1394625082." evidence="6">
    <original>C</original>
    <variation>R</variation>
    <location>
        <position position="172"/>
    </location>
</feature>
<feature type="sequence variant" id="VAR_069207" description="Found in a patient with Kallmann syndrome; likely pathogenic; the patient also carries mutation Ala-688 in SEMA3A." evidence="21">
    <original>Y</original>
    <variation>D</variation>
    <location>
        <position position="217"/>
    </location>
</feature>
<feature type="sequence variant" id="VAR_031014" description="In HH1; phenotype consistent with Kallmann syndrome." evidence="11">
    <original>R</original>
    <variation>P</variation>
    <location>
        <position position="262"/>
    </location>
</feature>
<feature type="sequence variant" id="VAR_007720" description="In HH1; phenotype consistent with Kallmann syndrome; loss of effect on the migratory activity of GnRH neurons; complete loss of FGFR1-binding." evidence="9 18 24">
    <original>N</original>
    <variation>K</variation>
    <location>
        <position position="267"/>
    </location>
</feature>
<feature type="sequence variant" id="VAR_031015" description="In HH1; phenotype consistent with Kallmann syndrome; dbSNP:rs140812865." evidence="15">
    <original>N</original>
    <variation>S</variation>
    <location>
        <position position="304"/>
    </location>
</feature>
<feature type="sequence variant" id="VAR_031016" description="In HH1; phenotype consistent with Kallmann syndrome; dbSNP:rs137852517." evidence="13 23">
    <original>S</original>
    <variation>L</variation>
    <location>
        <position position="396"/>
    </location>
</feature>
<feature type="sequence variant" id="VAR_012742" description="In HH1; phenotype consistent with Kallmann syndrome; loss of effect on the migratory activity of GnRH neurons; reduced FGFR1-binding; dbSNP:rs137852515." evidence="9 18 20 27">
    <original>E</original>
    <variation>K</variation>
    <location>
        <position position="514"/>
    </location>
</feature>
<feature type="sequence variant" id="VAR_031017" description="In HH1; phenotype consistent with Kallmann syndrome; loss of effect on the migratory activity of GnRH neurons; Reduced FGFR1-binding." evidence="9 18 26">
    <original>F</original>
    <variation>L</variation>
    <location>
        <position position="517"/>
    </location>
</feature>
<feature type="sequence variant" id="VAR_007721" description="In dbSNP:rs808119." evidence="6 8 10 15 16 17 24 26 27 28">
    <original>V</original>
    <variation>I</variation>
    <location>
        <position position="534"/>
    </location>
</feature>
<feature type="sequence variant" id="VAR_065364" description="In HH1; dbSNP:rs144586521." evidence="20">
    <original>E</original>
    <variation>K</variation>
    <location>
        <position position="539"/>
    </location>
</feature>
<feature type="sequence variant" id="VAR_031018" description="In HH1; phenotype consistent with Kallmann syndrome; dbSNP:rs1170543613." evidence="11">
    <original>W</original>
    <variation>R</variation>
    <location>
        <position position="571"/>
    </location>
</feature>
<feature type="sequence variant" id="VAR_069968" description="In HH1; phenotype consistent with normosmic idiopathic hypogonadotropic hypogonadism; the patient also carries a mutation in FGFR1; dbSNP:rs137900287." evidence="22">
    <original>V</original>
    <variation>L</variation>
    <location>
        <position position="587"/>
    </location>
</feature>
<feature type="sequence variant" id="VAR_031019" evidence="14">
    <original>K</original>
    <variation>M</variation>
    <location>
        <position position="666"/>
    </location>
</feature>
<feature type="sequence variant" id="VAR_031020" description="In dbSNP:rs775708192." evidence="14 26">
    <original>R</original>
    <variation>H</variation>
    <location>
        <position position="668"/>
    </location>
</feature>
<feature type="sequence variant" id="VAR_072992" description="In HH1; phenotype consistent with Kallmann syndrome; dbSNP:rs199771303." evidence="23">
    <original>H</original>
    <variation>R</variation>
    <location>
        <position position="672"/>
    </location>
</feature>
<feature type="sequence conflict" description="In Ref. 1; AAA59202, 3; CAA42841 and 7; CAA57554." evidence="31" ref="1 3 7">
    <original>R</original>
    <variation>P</variation>
    <location>
        <position position="48"/>
    </location>
</feature>
<feature type="sequence conflict" description="In Ref. 7; CAA57554." evidence="31" ref="7">
    <original>NN</original>
    <variation>VR</variation>
    <location>
        <begin position="70"/>
        <end position="71"/>
    </location>
</feature>
<feature type="sequence conflict" description="In Ref. 3; CAA42841." evidence="31" ref="3">
    <original>E</original>
    <variation>K</variation>
    <location>
        <position position="373"/>
    </location>
</feature>
<feature type="sequence conflict" description="In Ref. 3; CAA42841." evidence="31" ref="3">
    <original>A</original>
    <variation>R</variation>
    <location>
        <position position="540"/>
    </location>
</feature>
<name>KALM_HUMAN</name>
<accession>P23352</accession>
<accession>B2RPF8</accession>